<accession>P63099</accession>
<accession>P06705</accession>
<accession>P15117</accession>
<accession>Q08044</accession>
<protein>
    <recommendedName>
        <fullName>Calcineurin subunit B type 1</fullName>
    </recommendedName>
    <alternativeName>
        <fullName>Protein phosphatase 2B regulatory subunit 1</fullName>
    </alternativeName>
    <alternativeName>
        <fullName>Protein phosphatase 3 regulatory subunit B alpha isoform 1</fullName>
    </alternativeName>
</protein>
<evidence type="ECO:0000250" key="1">
    <source>
        <dbReference type="UniProtKB" id="P63098"/>
    </source>
</evidence>
<evidence type="ECO:0000250" key="2">
    <source>
        <dbReference type="UniProtKB" id="Q63810"/>
    </source>
</evidence>
<evidence type="ECO:0000255" key="3">
    <source>
        <dbReference type="PROSITE-ProRule" id="PRU00448"/>
    </source>
</evidence>
<evidence type="ECO:0000269" key="4">
    <source>
    </source>
</evidence>
<evidence type="ECO:0000269" key="5">
    <source>
    </source>
</evidence>
<evidence type="ECO:0000269" key="6">
    <source>
    </source>
</evidence>
<evidence type="ECO:0000269" key="7">
    <source>
    </source>
</evidence>
<evidence type="ECO:0000269" key="8">
    <source>
    </source>
</evidence>
<evidence type="ECO:0000305" key="9"/>
<evidence type="ECO:0000305" key="10">
    <source>
    </source>
</evidence>
<evidence type="ECO:0007744" key="11">
    <source>
        <dbReference type="PDB" id="1TCO"/>
    </source>
</evidence>
<evidence type="ECO:0007829" key="12">
    <source>
        <dbReference type="PDB" id="1TCO"/>
    </source>
</evidence>
<keyword id="KW-0002">3D-structure</keyword>
<keyword id="KW-0106">Calcium</keyword>
<keyword id="KW-1003">Cell membrane</keyword>
<keyword id="KW-0963">Cytoplasm</keyword>
<keyword id="KW-0903">Direct protein sequencing</keyword>
<keyword id="KW-0449">Lipoprotein</keyword>
<keyword id="KW-0472">Membrane</keyword>
<keyword id="KW-0479">Metal-binding</keyword>
<keyword id="KW-0519">Myristate</keyword>
<keyword id="KW-0597">Phosphoprotein</keyword>
<keyword id="KW-1185">Reference proteome</keyword>
<keyword id="KW-0677">Repeat</keyword>
<gene>
    <name type="primary">PPP3R1</name>
    <name type="synonym">CNA2</name>
    <name type="synonym">CNB</name>
</gene>
<proteinExistence type="evidence at protein level"/>
<dbReference type="EMBL" id="X71666">
    <property type="protein sequence ID" value="CAA50659.1"/>
    <property type="molecule type" value="mRNA"/>
</dbReference>
<dbReference type="PIR" id="I45831">
    <property type="entry name" value="S34127"/>
</dbReference>
<dbReference type="RefSeq" id="NP_777008.1">
    <property type="nucleotide sequence ID" value="NM_174583.2"/>
</dbReference>
<dbReference type="PDB" id="1TCO">
    <property type="method" value="X-ray"/>
    <property type="resolution" value="2.50 A"/>
    <property type="chains" value="B=2-170"/>
</dbReference>
<dbReference type="PDBsum" id="1TCO"/>
<dbReference type="SMR" id="P63099"/>
<dbReference type="FunCoup" id="P63099">
    <property type="interactions" value="4192"/>
</dbReference>
<dbReference type="STRING" id="9913.ENSBTAP00000058561"/>
<dbReference type="iPTMnet" id="P63099"/>
<dbReference type="PaxDb" id="9913-ENSBTAP00000014038"/>
<dbReference type="GeneID" id="282321"/>
<dbReference type="KEGG" id="bta:282321"/>
<dbReference type="CTD" id="5534"/>
<dbReference type="VEuPathDB" id="HostDB:ENSBTAG00000010619"/>
<dbReference type="eggNOG" id="KOG0034">
    <property type="taxonomic scope" value="Eukaryota"/>
</dbReference>
<dbReference type="HOGENOM" id="CLU_061288_10_1_1"/>
<dbReference type="InParanoid" id="P63099"/>
<dbReference type="OMA" id="DTNFDRD"/>
<dbReference type="OrthoDB" id="191686at2759"/>
<dbReference type="TreeFam" id="TF105558"/>
<dbReference type="Reactome" id="R-BTA-111447">
    <property type="pathway name" value="Activation of BAD and translocation to mitochondria"/>
</dbReference>
<dbReference type="Reactome" id="R-BTA-2025928">
    <property type="pathway name" value="Calcineurin activates NFAT"/>
</dbReference>
<dbReference type="Reactome" id="R-BTA-2871809">
    <property type="pathway name" value="FCERI mediated Ca+2 mobilization"/>
</dbReference>
<dbReference type="Reactome" id="R-BTA-4086398">
    <property type="pathway name" value="Ca2+ pathway"/>
</dbReference>
<dbReference type="Reactome" id="R-BTA-5607763">
    <property type="pathway name" value="CLEC7A (Dectin-1) induces NFAT activation"/>
</dbReference>
<dbReference type="EvolutionaryTrace" id="P63099"/>
<dbReference type="Proteomes" id="UP000009136">
    <property type="component" value="Chromosome 11"/>
</dbReference>
<dbReference type="Bgee" id="ENSBTAG00000010619">
    <property type="expression patterns" value="Expressed in occipital lobe and 106 other cell types or tissues"/>
</dbReference>
<dbReference type="GO" id="GO:0005955">
    <property type="term" value="C:calcineurin complex"/>
    <property type="evidence" value="ECO:0000314"/>
    <property type="project" value="UniProtKB"/>
</dbReference>
<dbReference type="GO" id="GO:0005829">
    <property type="term" value="C:cytosol"/>
    <property type="evidence" value="ECO:0000304"/>
    <property type="project" value="Reactome"/>
</dbReference>
<dbReference type="GO" id="GO:0042383">
    <property type="term" value="C:sarcolemma"/>
    <property type="evidence" value="ECO:0007669"/>
    <property type="project" value="UniProtKB-SubCell"/>
</dbReference>
<dbReference type="GO" id="GO:0005509">
    <property type="term" value="F:calcium ion binding"/>
    <property type="evidence" value="ECO:0007669"/>
    <property type="project" value="InterPro"/>
</dbReference>
<dbReference type="GO" id="GO:0008597">
    <property type="term" value="F:calcium-dependent protein serine/threonine phosphatase regulator activity"/>
    <property type="evidence" value="ECO:0000318"/>
    <property type="project" value="GO_Central"/>
</dbReference>
<dbReference type="GO" id="GO:0019902">
    <property type="term" value="F:phosphatase binding"/>
    <property type="evidence" value="ECO:0000353"/>
    <property type="project" value="UniProtKB"/>
</dbReference>
<dbReference type="GO" id="GO:0033173">
    <property type="term" value="P:calcineurin-NFAT signaling cascade"/>
    <property type="evidence" value="ECO:0000318"/>
    <property type="project" value="GO_Central"/>
</dbReference>
<dbReference type="CDD" id="cd00051">
    <property type="entry name" value="EFh"/>
    <property type="match status" value="1"/>
</dbReference>
<dbReference type="FunFam" id="1.10.238.10:FF:000047">
    <property type="entry name" value="Calcineurin subunit B type 1"/>
    <property type="match status" value="1"/>
</dbReference>
<dbReference type="Gene3D" id="1.10.238.10">
    <property type="entry name" value="EF-hand"/>
    <property type="match status" value="1"/>
</dbReference>
<dbReference type="InterPro" id="IPR011992">
    <property type="entry name" value="EF-hand-dom_pair"/>
</dbReference>
<dbReference type="InterPro" id="IPR018247">
    <property type="entry name" value="EF_Hand_1_Ca_BS"/>
</dbReference>
<dbReference type="InterPro" id="IPR002048">
    <property type="entry name" value="EF_hand_dom"/>
</dbReference>
<dbReference type="PANTHER" id="PTHR45942">
    <property type="entry name" value="PROTEIN PHOSPATASE 3 REGULATORY SUBUNIT B ALPHA ISOFORM TYPE 1"/>
    <property type="match status" value="1"/>
</dbReference>
<dbReference type="Pfam" id="PF13499">
    <property type="entry name" value="EF-hand_7"/>
    <property type="match status" value="2"/>
</dbReference>
<dbReference type="PRINTS" id="PR01697">
    <property type="entry name" value="PARVALBUMIN"/>
</dbReference>
<dbReference type="SMART" id="SM00054">
    <property type="entry name" value="EFh"/>
    <property type="match status" value="4"/>
</dbReference>
<dbReference type="SUPFAM" id="SSF47473">
    <property type="entry name" value="EF-hand"/>
    <property type="match status" value="1"/>
</dbReference>
<dbReference type="PROSITE" id="PS00018">
    <property type="entry name" value="EF_HAND_1"/>
    <property type="match status" value="4"/>
</dbReference>
<dbReference type="PROSITE" id="PS50222">
    <property type="entry name" value="EF_HAND_2"/>
    <property type="match status" value="4"/>
</dbReference>
<sequence>MGNEASYPLEMCSHFDADEIKRLGKRFKKLDLDNSGSLSVEEFMSLPELQQNPLVQRVIDIFDTDGNGEVDFKEFIEGVSQFSVKGDKEQKLRFAFRIYDMDKDGYISNGELFQVLKMMVGNNLKDTQLQQIVDKTIINADKDGDGRISFEEFCAVVGGLDIHKKMVVDV</sequence>
<reference key="1">
    <citation type="journal article" date="1994" name="DNA Seq.">
        <title>Isolation and characterization of a cDNA clone coding for the calcium-binding subunit of calcineurin from bovine brain: an identical amino acid sequence to the human protein.</title>
        <authorList>
            <person name="Nargang C.E."/>
            <person name="Bottorff D.A."/>
            <person name="Adachi K."/>
        </authorList>
    </citation>
    <scope>NUCLEOTIDE SEQUENCE [MRNA]</scope>
    <source>
        <tissue>Brain</tissue>
    </source>
</reference>
<reference key="2">
    <citation type="journal article" date="1984" name="Eur. J. Biochem.">
        <title>The structure of the B subunit of calcineurin.</title>
        <authorList>
            <person name="Aitken A."/>
            <person name="Klee C.B."/>
            <person name="Cohen P."/>
        </authorList>
    </citation>
    <scope>PROTEIN SEQUENCE OF 2-169</scope>
    <scope>MYRISTOYLATION AT GLY-2</scope>
    <source>
        <tissue>Brain</tissue>
    </source>
</reference>
<reference key="3">
    <citation type="journal article" date="1979" name="Proc. Natl. Acad. Sci. U.S.A.">
        <title>Calcineurin: a calcium- and calmodulin-binding protein of the nervous system.</title>
        <authorList>
            <person name="Klee C.B."/>
            <person name="Crouch T.H."/>
            <person name="Krinks M.H."/>
        </authorList>
    </citation>
    <scope>FUNCTION</scope>
    <scope>IDENTIFICATION IN A COMPLEX WITH CALCINEURIN A AND CALMODULIN</scope>
</reference>
<reference key="4">
    <citation type="journal article" date="1991" name="Cell">
        <title>Calcineurin is a common target of cyclophilin-cyclosporin A and FKBP-FK506 complexes.</title>
        <authorList>
            <person name="Liu J."/>
            <person name="Farmer J.D. Jr."/>
            <person name="Lane W.S."/>
            <person name="Friedman J."/>
            <person name="Weissman I."/>
            <person name="Schreiber S.L."/>
        </authorList>
    </citation>
    <scope>IDENTIFICATION IN A COMPLEX WITH PPP3CA AND CALMODULIN</scope>
</reference>
<reference key="5">
    <citation type="journal article" date="2006" name="Biochemistry">
        <title>Structure of calmodulin bound to a calcineurin peptide: a new way of making an old binding mode.</title>
        <authorList>
            <person name="Ye Q."/>
            <person name="Li X."/>
            <person name="Wong A."/>
            <person name="Wei Q."/>
            <person name="Jia Z."/>
        </authorList>
    </citation>
    <scope>FUNCTION</scope>
</reference>
<reference key="6">
    <citation type="journal article" date="1995" name="Cell">
        <title>X-ray structure of calcineurin inhibited by the immunophilin-immunosuppressant FKBP12-FK506 complex.</title>
        <authorList>
            <person name="Griffith J.P."/>
            <person name="Kim J.L."/>
            <person name="Kim E.E."/>
            <person name="Sintchak M.D."/>
            <person name="Thomson J.A."/>
            <person name="Fitzgibbon M.J."/>
            <person name="Fleming M.A."/>
            <person name="Caron P.R."/>
            <person name="Hsiao K."/>
            <person name="Navia M.A."/>
        </authorList>
    </citation>
    <scope>X-RAY CRYSTALLOGRAPHY (2.50 ANGSTROMS) OF 2-170 IN COMPLEX WITH PPP3CA AND CALCIUM</scope>
</reference>
<organism>
    <name type="scientific">Bos taurus</name>
    <name type="common">Bovine</name>
    <dbReference type="NCBI Taxonomy" id="9913"/>
    <lineage>
        <taxon>Eukaryota</taxon>
        <taxon>Metazoa</taxon>
        <taxon>Chordata</taxon>
        <taxon>Craniata</taxon>
        <taxon>Vertebrata</taxon>
        <taxon>Euteleostomi</taxon>
        <taxon>Mammalia</taxon>
        <taxon>Eutheria</taxon>
        <taxon>Laurasiatheria</taxon>
        <taxon>Artiodactyla</taxon>
        <taxon>Ruminantia</taxon>
        <taxon>Pecora</taxon>
        <taxon>Bovidae</taxon>
        <taxon>Bovinae</taxon>
        <taxon>Bos</taxon>
    </lineage>
</organism>
<feature type="initiator methionine" description="Removed" evidence="7">
    <location>
        <position position="1"/>
    </location>
</feature>
<feature type="chain" id="PRO_0000073483" description="Calcineurin subunit B type 1">
    <location>
        <begin position="2"/>
        <end position="170"/>
    </location>
</feature>
<feature type="domain" description="EF-hand 1" evidence="3">
    <location>
        <begin position="18"/>
        <end position="46"/>
    </location>
</feature>
<feature type="domain" description="EF-hand 2" evidence="3">
    <location>
        <begin position="50"/>
        <end position="85"/>
    </location>
</feature>
<feature type="domain" description="EF-hand 3" evidence="3">
    <location>
        <begin position="87"/>
        <end position="122"/>
    </location>
</feature>
<feature type="domain" description="EF-hand 4" evidence="3">
    <location>
        <begin position="128"/>
        <end position="163"/>
    </location>
</feature>
<feature type="region of interest" description="Calcineurin A binding" evidence="8">
    <location>
        <begin position="131"/>
        <end position="136"/>
    </location>
</feature>
<feature type="binding site" evidence="3 8 11">
    <location>
        <position position="31"/>
    </location>
    <ligand>
        <name>Ca(2+)</name>
        <dbReference type="ChEBI" id="CHEBI:29108"/>
        <label>1</label>
    </ligand>
</feature>
<feature type="binding site" evidence="3 8 11">
    <location>
        <position position="33"/>
    </location>
    <ligand>
        <name>Ca(2+)</name>
        <dbReference type="ChEBI" id="CHEBI:29108"/>
        <label>1</label>
    </ligand>
</feature>
<feature type="binding site" evidence="3 8 11">
    <location>
        <position position="35"/>
    </location>
    <ligand>
        <name>Ca(2+)</name>
        <dbReference type="ChEBI" id="CHEBI:29108"/>
        <label>1</label>
    </ligand>
</feature>
<feature type="binding site" evidence="3 8 11">
    <location>
        <position position="37"/>
    </location>
    <ligand>
        <name>Ca(2+)</name>
        <dbReference type="ChEBI" id="CHEBI:29108"/>
        <label>1</label>
    </ligand>
</feature>
<feature type="binding site" evidence="3 8 11">
    <location>
        <position position="42"/>
    </location>
    <ligand>
        <name>Ca(2+)</name>
        <dbReference type="ChEBI" id="CHEBI:29108"/>
        <label>1</label>
    </ligand>
</feature>
<feature type="binding site" evidence="3 8 11">
    <location>
        <position position="63"/>
    </location>
    <ligand>
        <name>Ca(2+)</name>
        <dbReference type="ChEBI" id="CHEBI:29108"/>
        <label>2</label>
    </ligand>
</feature>
<feature type="binding site" evidence="3 8 11">
    <location>
        <position position="65"/>
    </location>
    <ligand>
        <name>Ca(2+)</name>
        <dbReference type="ChEBI" id="CHEBI:29108"/>
        <label>2</label>
    </ligand>
</feature>
<feature type="binding site" evidence="3 8 11">
    <location>
        <position position="67"/>
    </location>
    <ligand>
        <name>Ca(2+)</name>
        <dbReference type="ChEBI" id="CHEBI:29108"/>
        <label>2</label>
    </ligand>
</feature>
<feature type="binding site" evidence="3 8 11">
    <location>
        <position position="69"/>
    </location>
    <ligand>
        <name>Ca(2+)</name>
        <dbReference type="ChEBI" id="CHEBI:29108"/>
        <label>2</label>
    </ligand>
</feature>
<feature type="binding site" evidence="3 8 11">
    <location>
        <position position="74"/>
    </location>
    <ligand>
        <name>Ca(2+)</name>
        <dbReference type="ChEBI" id="CHEBI:29108"/>
        <label>2</label>
    </ligand>
</feature>
<feature type="binding site" evidence="3 8 11">
    <location>
        <position position="100"/>
    </location>
    <ligand>
        <name>Ca(2+)</name>
        <dbReference type="ChEBI" id="CHEBI:29108"/>
        <label>3</label>
    </ligand>
</feature>
<feature type="binding site" evidence="3 8 11">
    <location>
        <position position="102"/>
    </location>
    <ligand>
        <name>Ca(2+)</name>
        <dbReference type="ChEBI" id="CHEBI:29108"/>
        <label>3</label>
    </ligand>
</feature>
<feature type="binding site" evidence="3 8 11">
    <location>
        <position position="104"/>
    </location>
    <ligand>
        <name>Ca(2+)</name>
        <dbReference type="ChEBI" id="CHEBI:29108"/>
        <label>3</label>
    </ligand>
</feature>
<feature type="binding site" evidence="3 8 11">
    <location>
        <position position="106"/>
    </location>
    <ligand>
        <name>Ca(2+)</name>
        <dbReference type="ChEBI" id="CHEBI:29108"/>
        <label>3</label>
    </ligand>
</feature>
<feature type="binding site" evidence="3 8 11">
    <location>
        <position position="111"/>
    </location>
    <ligand>
        <name>Ca(2+)</name>
        <dbReference type="ChEBI" id="CHEBI:29108"/>
        <label>3</label>
    </ligand>
</feature>
<feature type="binding site" evidence="3 8 11">
    <location>
        <position position="141"/>
    </location>
    <ligand>
        <name>Ca(2+)</name>
        <dbReference type="ChEBI" id="CHEBI:29108"/>
        <label>4</label>
    </ligand>
</feature>
<feature type="binding site" evidence="3 8 11">
    <location>
        <position position="143"/>
    </location>
    <ligand>
        <name>Ca(2+)</name>
        <dbReference type="ChEBI" id="CHEBI:29108"/>
        <label>4</label>
    </ligand>
</feature>
<feature type="binding site" evidence="3 8 11">
    <location>
        <position position="145"/>
    </location>
    <ligand>
        <name>Ca(2+)</name>
        <dbReference type="ChEBI" id="CHEBI:29108"/>
        <label>4</label>
    </ligand>
</feature>
<feature type="binding site" evidence="3 8 11">
    <location>
        <position position="147"/>
    </location>
    <ligand>
        <name>Ca(2+)</name>
        <dbReference type="ChEBI" id="CHEBI:29108"/>
        <label>4</label>
    </ligand>
</feature>
<feature type="binding site" evidence="3 8 11">
    <location>
        <position position="152"/>
    </location>
    <ligand>
        <name>Ca(2+)</name>
        <dbReference type="ChEBI" id="CHEBI:29108"/>
        <label>4</label>
    </ligand>
</feature>
<feature type="site" description="Interaction with PxVP motif in substrates of the catalytic subunit" evidence="1">
    <location>
        <position position="118"/>
    </location>
</feature>
<feature type="site" description="Interaction with PxVP motif in substrates of the catalytic subunit" evidence="1">
    <location>
        <position position="122"/>
    </location>
</feature>
<feature type="modified residue" description="Phosphotyrosine" evidence="2">
    <location>
        <position position="106"/>
    </location>
</feature>
<feature type="lipid moiety-binding region" description="N-myristoyl glycine" evidence="7">
    <location>
        <position position="2"/>
    </location>
</feature>
<feature type="sequence conflict" description="In Ref. 2; AA sequence." evidence="9" ref="2">
    <original>C</original>
    <variation>M</variation>
    <location>
        <position position="12"/>
    </location>
</feature>
<feature type="sequence conflict" description="In Ref. 2; AA sequence." evidence="9" ref="2">
    <original>C</original>
    <variation>S</variation>
    <location>
        <position position="154"/>
    </location>
</feature>
<feature type="helix" evidence="12">
    <location>
        <begin position="17"/>
        <end position="30"/>
    </location>
</feature>
<feature type="turn" evidence="12">
    <location>
        <begin position="31"/>
        <end position="34"/>
    </location>
</feature>
<feature type="helix" evidence="12">
    <location>
        <begin position="40"/>
        <end position="43"/>
    </location>
</feature>
<feature type="strand" evidence="12">
    <location>
        <begin position="49"/>
        <end position="51"/>
    </location>
</feature>
<feature type="helix" evidence="12">
    <location>
        <begin position="55"/>
        <end position="62"/>
    </location>
</feature>
<feature type="strand" evidence="12">
    <location>
        <begin position="67"/>
        <end position="69"/>
    </location>
</feature>
<feature type="helix" evidence="12">
    <location>
        <begin position="72"/>
        <end position="82"/>
    </location>
</feature>
<feature type="helix" evidence="12">
    <location>
        <begin position="88"/>
        <end position="99"/>
    </location>
</feature>
<feature type="strand" evidence="12">
    <location>
        <begin position="104"/>
        <end position="107"/>
    </location>
</feature>
<feature type="helix" evidence="12">
    <location>
        <begin position="109"/>
        <end position="120"/>
    </location>
</feature>
<feature type="helix" evidence="12">
    <location>
        <begin position="126"/>
        <end position="140"/>
    </location>
</feature>
<feature type="strand" evidence="12">
    <location>
        <begin position="144"/>
        <end position="149"/>
    </location>
</feature>
<feature type="helix" evidence="12">
    <location>
        <begin position="150"/>
        <end position="157"/>
    </location>
</feature>
<feature type="helix" evidence="12">
    <location>
        <begin position="162"/>
        <end position="165"/>
    </location>
</feature>
<comment type="function">
    <text evidence="4 6">Regulatory subunit of calcineurin, a calcium-dependent, calmodulin stimulated protein phosphatase. Confers calcium sensitivity.</text>
</comment>
<comment type="subunit">
    <text evidence="1 2 5 6 8">Forms a complex composed of a calmodulin-dependent catalytic subunit (also known as calcineurin A) and a regulatory Ca(2+)-binding subunit (also known as calcineurin B) (PubMed:1715244, PubMed:293720, PubMed:7543369). There are three catalytic subunits, each encoded by a separate gene (PPP3CA, PPP3CB, and PPP3CC) and two regulatory subunits which are also encoded by separate genes (PPP3R1 and PPP3R2). The interaction between the 2 subunits is Ca(2+)-independent (PubMed:293720). Interacts with catalytic subunit PPP3CA/calcineurin A (PubMed:1715244, PubMed:7543369). Interacts with catalytic subunit PPP3CB/calcineurin A (By similarity). Interacts with CIB1 (via C-terminal region); the interaction increases upon cardiomyocyte hypertrophy. Interacts with RCAN1 (By similarity). Interacts with SPATA33 (via PQIIIT motif) (By similarity).</text>
</comment>
<comment type="subcellular location">
    <subcellularLocation>
        <location evidence="2">Cytoplasm</location>
        <location evidence="2">Cytosol</location>
    </subcellularLocation>
    <subcellularLocation>
        <location evidence="10">Cell membrane</location>
        <topology evidence="10">Lipid-anchor</topology>
    </subcellularLocation>
    <subcellularLocation>
        <location evidence="2">Cell membrane</location>
        <location evidence="2">Sarcolemma</location>
    </subcellularLocation>
    <text evidence="2">Translocates from the cytosol to the sarcolemma in a CIB1-dependent manner during cardiomyocyte hypertrophy.</text>
</comment>
<comment type="miscellaneous">
    <text evidence="8">This protein has four functional calcium-binding sites.</text>
</comment>
<comment type="similarity">
    <text evidence="9">Belongs to the calcineurin regulatory subunit family.</text>
</comment>
<name>CANB1_BOVIN</name>